<comment type="function">
    <text evidence="1">Catalyzes the ATP-dependent conversion of 7-carboxy-7-deazaguanine (CDG) to 7-cyano-7-deazaguanine (preQ(0)).</text>
</comment>
<comment type="catalytic activity">
    <reaction evidence="1">
        <text>7-carboxy-7-deazaguanine + NH4(+) + ATP = 7-cyano-7-deazaguanine + ADP + phosphate + H2O + H(+)</text>
        <dbReference type="Rhea" id="RHEA:27982"/>
        <dbReference type="ChEBI" id="CHEBI:15377"/>
        <dbReference type="ChEBI" id="CHEBI:15378"/>
        <dbReference type="ChEBI" id="CHEBI:28938"/>
        <dbReference type="ChEBI" id="CHEBI:30616"/>
        <dbReference type="ChEBI" id="CHEBI:43474"/>
        <dbReference type="ChEBI" id="CHEBI:45075"/>
        <dbReference type="ChEBI" id="CHEBI:61036"/>
        <dbReference type="ChEBI" id="CHEBI:456216"/>
        <dbReference type="EC" id="6.3.4.20"/>
    </reaction>
</comment>
<comment type="cofactor">
    <cofactor evidence="1">
        <name>Zn(2+)</name>
        <dbReference type="ChEBI" id="CHEBI:29105"/>
    </cofactor>
    <text evidence="1">Binds 1 zinc ion per subunit.</text>
</comment>
<comment type="pathway">
    <text evidence="1">Purine metabolism; 7-cyano-7-deazaguanine biosynthesis.</text>
</comment>
<comment type="similarity">
    <text evidence="1">Belongs to the QueC family.</text>
</comment>
<protein>
    <recommendedName>
        <fullName evidence="1">7-cyano-7-deazaguanine synthase</fullName>
        <ecNumber evidence="1">6.3.4.20</ecNumber>
    </recommendedName>
    <alternativeName>
        <fullName evidence="1">7-cyano-7-carbaguanine synthase</fullName>
    </alternativeName>
    <alternativeName>
        <fullName evidence="1">PreQ(0) synthase</fullName>
    </alternativeName>
    <alternativeName>
        <fullName evidence="1">Queuosine biosynthesis protein QueC</fullName>
    </alternativeName>
</protein>
<accession>B9JLH9</accession>
<evidence type="ECO:0000255" key="1">
    <source>
        <dbReference type="HAMAP-Rule" id="MF_01633"/>
    </source>
</evidence>
<gene>
    <name evidence="1" type="primary">queC</name>
    <name type="ordered locus">Arad_9733</name>
</gene>
<sequence length="236" mass="25496">MKTIVVCSGGLDSVSLAHKVAAEQQLIGLVSFDYGQRHRKELDFAAACAKRLGVPHEIIDITTIGKHLTGSALTDDVDVPDGHYAEETMKATVVPNRNAIMLAIAFGLAAAQKADAVAVAVHGGDHFIYPDCRPGFIDAFQQMQNQALDGYASVSLYAPFVMTSKADIVTDGARHKTPFAETWSCYKGGERHCGRCGTCVERREAFHLAGVEDPTDYEDPDFWVTATSGFSAQEVK</sequence>
<proteinExistence type="inferred from homology"/>
<dbReference type="EC" id="6.3.4.20" evidence="1"/>
<dbReference type="EMBL" id="CP000629">
    <property type="protein sequence ID" value="ACM30715.1"/>
    <property type="molecule type" value="Genomic_DNA"/>
</dbReference>
<dbReference type="RefSeq" id="WP_015917974.1">
    <property type="nucleotide sequence ID" value="NC_011983.1"/>
</dbReference>
<dbReference type="SMR" id="B9JLH9"/>
<dbReference type="STRING" id="311403.Arad_9733"/>
<dbReference type="GeneID" id="86851826"/>
<dbReference type="KEGG" id="ara:Arad_9733"/>
<dbReference type="eggNOG" id="COG0603">
    <property type="taxonomic scope" value="Bacteria"/>
</dbReference>
<dbReference type="HOGENOM" id="CLU_081854_1_0_5"/>
<dbReference type="UniPathway" id="UPA00391"/>
<dbReference type="Proteomes" id="UP000001600">
    <property type="component" value="Chromosome 2"/>
</dbReference>
<dbReference type="GO" id="GO:0005524">
    <property type="term" value="F:ATP binding"/>
    <property type="evidence" value="ECO:0007669"/>
    <property type="project" value="UniProtKB-UniRule"/>
</dbReference>
<dbReference type="GO" id="GO:0016879">
    <property type="term" value="F:ligase activity, forming carbon-nitrogen bonds"/>
    <property type="evidence" value="ECO:0007669"/>
    <property type="project" value="UniProtKB-UniRule"/>
</dbReference>
<dbReference type="GO" id="GO:0008270">
    <property type="term" value="F:zinc ion binding"/>
    <property type="evidence" value="ECO:0007669"/>
    <property type="project" value="UniProtKB-UniRule"/>
</dbReference>
<dbReference type="GO" id="GO:0008616">
    <property type="term" value="P:queuosine biosynthetic process"/>
    <property type="evidence" value="ECO:0007669"/>
    <property type="project" value="UniProtKB-UniRule"/>
</dbReference>
<dbReference type="CDD" id="cd01995">
    <property type="entry name" value="QueC-like"/>
    <property type="match status" value="1"/>
</dbReference>
<dbReference type="Gene3D" id="3.40.50.620">
    <property type="entry name" value="HUPs"/>
    <property type="match status" value="1"/>
</dbReference>
<dbReference type="HAMAP" id="MF_01633">
    <property type="entry name" value="QueC"/>
    <property type="match status" value="1"/>
</dbReference>
<dbReference type="InterPro" id="IPR018317">
    <property type="entry name" value="QueC"/>
</dbReference>
<dbReference type="InterPro" id="IPR014729">
    <property type="entry name" value="Rossmann-like_a/b/a_fold"/>
</dbReference>
<dbReference type="NCBIfam" id="TIGR00364">
    <property type="entry name" value="7-cyano-7-deazaguanine synthase QueC"/>
    <property type="match status" value="1"/>
</dbReference>
<dbReference type="PANTHER" id="PTHR42914">
    <property type="entry name" value="7-CYANO-7-DEAZAGUANINE SYNTHASE"/>
    <property type="match status" value="1"/>
</dbReference>
<dbReference type="PANTHER" id="PTHR42914:SF1">
    <property type="entry name" value="7-CYANO-7-DEAZAGUANINE SYNTHASE"/>
    <property type="match status" value="1"/>
</dbReference>
<dbReference type="Pfam" id="PF06508">
    <property type="entry name" value="QueC"/>
    <property type="match status" value="1"/>
</dbReference>
<dbReference type="PIRSF" id="PIRSF006293">
    <property type="entry name" value="ExsB"/>
    <property type="match status" value="1"/>
</dbReference>
<dbReference type="SUPFAM" id="SSF52402">
    <property type="entry name" value="Adenine nucleotide alpha hydrolases-like"/>
    <property type="match status" value="1"/>
</dbReference>
<reference key="1">
    <citation type="journal article" date="2009" name="J. Bacteriol.">
        <title>Genome sequences of three Agrobacterium biovars help elucidate the evolution of multichromosome genomes in bacteria.</title>
        <authorList>
            <person name="Slater S.C."/>
            <person name="Goldman B.S."/>
            <person name="Goodner B."/>
            <person name="Setubal J.C."/>
            <person name="Farrand S.K."/>
            <person name="Nester E.W."/>
            <person name="Burr T.J."/>
            <person name="Banta L."/>
            <person name="Dickerman A.W."/>
            <person name="Paulsen I."/>
            <person name="Otten L."/>
            <person name="Suen G."/>
            <person name="Welch R."/>
            <person name="Almeida N.F."/>
            <person name="Arnold F."/>
            <person name="Burton O.T."/>
            <person name="Du Z."/>
            <person name="Ewing A."/>
            <person name="Godsy E."/>
            <person name="Heisel S."/>
            <person name="Houmiel K.L."/>
            <person name="Jhaveri J."/>
            <person name="Lu J."/>
            <person name="Miller N.M."/>
            <person name="Norton S."/>
            <person name="Chen Q."/>
            <person name="Phoolcharoen W."/>
            <person name="Ohlin V."/>
            <person name="Ondrusek D."/>
            <person name="Pride N."/>
            <person name="Stricklin S.L."/>
            <person name="Sun J."/>
            <person name="Wheeler C."/>
            <person name="Wilson L."/>
            <person name="Zhu H."/>
            <person name="Wood D.W."/>
        </authorList>
    </citation>
    <scope>NUCLEOTIDE SEQUENCE [LARGE SCALE GENOMIC DNA]</scope>
    <source>
        <strain>K84 / ATCC BAA-868</strain>
    </source>
</reference>
<feature type="chain" id="PRO_1000186547" description="7-cyano-7-deazaguanine synthase">
    <location>
        <begin position="1"/>
        <end position="236"/>
    </location>
</feature>
<feature type="binding site" evidence="1">
    <location>
        <begin position="7"/>
        <end position="17"/>
    </location>
    <ligand>
        <name>ATP</name>
        <dbReference type="ChEBI" id="CHEBI:30616"/>
    </ligand>
</feature>
<feature type="binding site" evidence="1">
    <location>
        <position position="185"/>
    </location>
    <ligand>
        <name>Zn(2+)</name>
        <dbReference type="ChEBI" id="CHEBI:29105"/>
    </ligand>
</feature>
<feature type="binding site" evidence="1">
    <location>
        <position position="193"/>
    </location>
    <ligand>
        <name>Zn(2+)</name>
        <dbReference type="ChEBI" id="CHEBI:29105"/>
    </ligand>
</feature>
<feature type="binding site" evidence="1">
    <location>
        <position position="196"/>
    </location>
    <ligand>
        <name>Zn(2+)</name>
        <dbReference type="ChEBI" id="CHEBI:29105"/>
    </ligand>
</feature>
<feature type="binding site" evidence="1">
    <location>
        <position position="199"/>
    </location>
    <ligand>
        <name>Zn(2+)</name>
        <dbReference type="ChEBI" id="CHEBI:29105"/>
    </ligand>
</feature>
<organism>
    <name type="scientific">Rhizobium rhizogenes (strain K84 / ATCC BAA-868)</name>
    <name type="common">Agrobacterium radiobacter</name>
    <dbReference type="NCBI Taxonomy" id="311403"/>
    <lineage>
        <taxon>Bacteria</taxon>
        <taxon>Pseudomonadati</taxon>
        <taxon>Pseudomonadota</taxon>
        <taxon>Alphaproteobacteria</taxon>
        <taxon>Hyphomicrobiales</taxon>
        <taxon>Rhizobiaceae</taxon>
        <taxon>Rhizobium/Agrobacterium group</taxon>
        <taxon>Rhizobium</taxon>
    </lineage>
</organism>
<keyword id="KW-0067">ATP-binding</keyword>
<keyword id="KW-0436">Ligase</keyword>
<keyword id="KW-0479">Metal-binding</keyword>
<keyword id="KW-0547">Nucleotide-binding</keyword>
<keyword id="KW-0671">Queuosine biosynthesis</keyword>
<keyword id="KW-0862">Zinc</keyword>
<name>QUEC_RHIR8</name>